<protein>
    <recommendedName>
        <fullName evidence="1">Fluoride-specific ion channel FluC</fullName>
    </recommendedName>
</protein>
<feature type="chain" id="PRO_0000110079" description="Fluoride-specific ion channel FluC">
    <location>
        <begin position="1"/>
        <end position="128"/>
    </location>
</feature>
<feature type="transmembrane region" description="Helical" evidence="1">
    <location>
        <begin position="5"/>
        <end position="25"/>
    </location>
</feature>
<feature type="transmembrane region" description="Helical" evidence="1">
    <location>
        <begin position="35"/>
        <end position="55"/>
    </location>
</feature>
<feature type="transmembrane region" description="Helical" evidence="1">
    <location>
        <begin position="67"/>
        <end position="87"/>
    </location>
</feature>
<feature type="transmembrane region" description="Helical" evidence="1">
    <location>
        <begin position="96"/>
        <end position="116"/>
    </location>
</feature>
<feature type="binding site" evidence="1">
    <location>
        <position position="75"/>
    </location>
    <ligand>
        <name>Na(+)</name>
        <dbReference type="ChEBI" id="CHEBI:29101"/>
        <note>structural</note>
    </ligand>
</feature>
<feature type="binding site" evidence="1">
    <location>
        <position position="78"/>
    </location>
    <ligand>
        <name>Na(+)</name>
        <dbReference type="ChEBI" id="CHEBI:29101"/>
        <note>structural</note>
    </ligand>
</feature>
<dbReference type="EMBL" id="CP000010">
    <property type="protein sequence ID" value="AAU49929.1"/>
    <property type="molecule type" value="Genomic_DNA"/>
</dbReference>
<dbReference type="RefSeq" id="WP_004186560.1">
    <property type="nucleotide sequence ID" value="NC_006348.1"/>
</dbReference>
<dbReference type="RefSeq" id="YP_103728.1">
    <property type="nucleotide sequence ID" value="NC_006348.1"/>
</dbReference>
<dbReference type="SMR" id="Q62HU2"/>
<dbReference type="GeneID" id="92979864"/>
<dbReference type="KEGG" id="bma:BMA2160"/>
<dbReference type="PATRIC" id="fig|243160.12.peg.2229"/>
<dbReference type="eggNOG" id="COG0239">
    <property type="taxonomic scope" value="Bacteria"/>
</dbReference>
<dbReference type="HOGENOM" id="CLU_114342_3_3_4"/>
<dbReference type="Proteomes" id="UP000006693">
    <property type="component" value="Chromosome 1"/>
</dbReference>
<dbReference type="GO" id="GO:0005886">
    <property type="term" value="C:plasma membrane"/>
    <property type="evidence" value="ECO:0007669"/>
    <property type="project" value="UniProtKB-SubCell"/>
</dbReference>
<dbReference type="GO" id="GO:0062054">
    <property type="term" value="F:fluoride channel activity"/>
    <property type="evidence" value="ECO:0007669"/>
    <property type="project" value="UniProtKB-UniRule"/>
</dbReference>
<dbReference type="GO" id="GO:0046872">
    <property type="term" value="F:metal ion binding"/>
    <property type="evidence" value="ECO:0007669"/>
    <property type="project" value="UniProtKB-KW"/>
</dbReference>
<dbReference type="GO" id="GO:0140114">
    <property type="term" value="P:cellular detoxification of fluoride"/>
    <property type="evidence" value="ECO:0007669"/>
    <property type="project" value="UniProtKB-UniRule"/>
</dbReference>
<dbReference type="HAMAP" id="MF_00454">
    <property type="entry name" value="FluC"/>
    <property type="match status" value="1"/>
</dbReference>
<dbReference type="InterPro" id="IPR003691">
    <property type="entry name" value="FluC"/>
</dbReference>
<dbReference type="NCBIfam" id="TIGR00494">
    <property type="entry name" value="crcB"/>
    <property type="match status" value="1"/>
</dbReference>
<dbReference type="NCBIfam" id="NF010792">
    <property type="entry name" value="PRK14196.1"/>
    <property type="match status" value="1"/>
</dbReference>
<dbReference type="PANTHER" id="PTHR28259">
    <property type="entry name" value="FLUORIDE EXPORT PROTEIN 1-RELATED"/>
    <property type="match status" value="1"/>
</dbReference>
<dbReference type="PANTHER" id="PTHR28259:SF1">
    <property type="entry name" value="FLUORIDE EXPORT PROTEIN 1-RELATED"/>
    <property type="match status" value="1"/>
</dbReference>
<dbReference type="Pfam" id="PF02537">
    <property type="entry name" value="CRCB"/>
    <property type="match status" value="1"/>
</dbReference>
<gene>
    <name evidence="1" type="primary">fluC</name>
    <name evidence="1" type="synonym">crcB</name>
    <name type="ordered locus">BMA2160</name>
</gene>
<name>FLUC_BURMA</name>
<proteinExistence type="inferred from homology"/>
<keyword id="KW-0997">Cell inner membrane</keyword>
<keyword id="KW-1003">Cell membrane</keyword>
<keyword id="KW-0407">Ion channel</keyword>
<keyword id="KW-0406">Ion transport</keyword>
<keyword id="KW-0472">Membrane</keyword>
<keyword id="KW-0479">Metal-binding</keyword>
<keyword id="KW-1185">Reference proteome</keyword>
<keyword id="KW-0915">Sodium</keyword>
<keyword id="KW-0812">Transmembrane</keyword>
<keyword id="KW-1133">Transmembrane helix</keyword>
<keyword id="KW-0813">Transport</keyword>
<reference key="1">
    <citation type="journal article" date="2004" name="Proc. Natl. Acad. Sci. U.S.A.">
        <title>Structural flexibility in the Burkholderia mallei genome.</title>
        <authorList>
            <person name="Nierman W.C."/>
            <person name="DeShazer D."/>
            <person name="Kim H.S."/>
            <person name="Tettelin H."/>
            <person name="Nelson K.E."/>
            <person name="Feldblyum T.V."/>
            <person name="Ulrich R.L."/>
            <person name="Ronning C.M."/>
            <person name="Brinkac L.M."/>
            <person name="Daugherty S.C."/>
            <person name="Davidsen T.D."/>
            <person name="DeBoy R.T."/>
            <person name="Dimitrov G."/>
            <person name="Dodson R.J."/>
            <person name="Durkin A.S."/>
            <person name="Gwinn M.L."/>
            <person name="Haft D.H."/>
            <person name="Khouri H.M."/>
            <person name="Kolonay J.F."/>
            <person name="Madupu R."/>
            <person name="Mohammoud Y."/>
            <person name="Nelson W.C."/>
            <person name="Radune D."/>
            <person name="Romero C.M."/>
            <person name="Sarria S."/>
            <person name="Selengut J."/>
            <person name="Shamblin C."/>
            <person name="Sullivan S.A."/>
            <person name="White O."/>
            <person name="Yu Y."/>
            <person name="Zafar N."/>
            <person name="Zhou L."/>
            <person name="Fraser C.M."/>
        </authorList>
    </citation>
    <scope>NUCLEOTIDE SEQUENCE [LARGE SCALE GENOMIC DNA]</scope>
    <source>
        <strain>ATCC 23344</strain>
    </source>
</reference>
<sequence length="128" mass="13522">MFYSIVAIFVGAGFGALLRWFLSIGLNALLPEVPLGTLASNLIGGYLIGIAVVAFATRAGLPPEWRLFVITGFMGGLTTFSTYSVEVMTHAVQGEFGWALAVAALHLIGSFTLTGLGMWTARAWLAPA</sequence>
<accession>Q62HU2</accession>
<evidence type="ECO:0000255" key="1">
    <source>
        <dbReference type="HAMAP-Rule" id="MF_00454"/>
    </source>
</evidence>
<comment type="function">
    <text evidence="1">Fluoride-specific ion channel. Important for reducing fluoride concentration in the cell, thus reducing its toxicity.</text>
</comment>
<comment type="catalytic activity">
    <reaction evidence="1">
        <text>fluoride(in) = fluoride(out)</text>
        <dbReference type="Rhea" id="RHEA:76159"/>
        <dbReference type="ChEBI" id="CHEBI:17051"/>
    </reaction>
    <physiologicalReaction direction="left-to-right" evidence="1">
        <dbReference type="Rhea" id="RHEA:76160"/>
    </physiologicalReaction>
</comment>
<comment type="activity regulation">
    <text evidence="1">Na(+) is not transported, but it plays an essential structural role and its presence is essential for fluoride channel function.</text>
</comment>
<comment type="subcellular location">
    <subcellularLocation>
        <location evidence="1">Cell inner membrane</location>
        <topology evidence="1">Multi-pass membrane protein</topology>
    </subcellularLocation>
</comment>
<comment type="similarity">
    <text evidence="1">Belongs to the fluoride channel Fluc/FEX (TC 1.A.43) family.</text>
</comment>
<organism>
    <name type="scientific">Burkholderia mallei (strain ATCC 23344)</name>
    <dbReference type="NCBI Taxonomy" id="243160"/>
    <lineage>
        <taxon>Bacteria</taxon>
        <taxon>Pseudomonadati</taxon>
        <taxon>Pseudomonadota</taxon>
        <taxon>Betaproteobacteria</taxon>
        <taxon>Burkholderiales</taxon>
        <taxon>Burkholderiaceae</taxon>
        <taxon>Burkholderia</taxon>
        <taxon>pseudomallei group</taxon>
    </lineage>
</organism>